<protein>
    <recommendedName>
        <fullName evidence="2">U-scoloptoxin(23)-Er2a</fullName>
        <shortName evidence="2">U-SLPTX(23)-Er2a</shortName>
    </recommendedName>
</protein>
<feature type="signal peptide" evidence="1">
    <location>
        <begin position="1"/>
        <end status="unknown"/>
    </location>
</feature>
<feature type="chain" id="PRO_0000446835" description="U-scoloptoxin(23)-Er2a" evidence="3">
    <location>
        <begin status="unknown"/>
        <end position="59"/>
    </location>
</feature>
<proteinExistence type="inferred from homology"/>
<sequence length="59" mass="6995">MSLIVVRTHSFILFWFSCCWRVCFIQWIRKYSIPMADMGRRDSASALLDASENKNHLWG</sequence>
<organism>
    <name type="scientific">Ethmostigmus rubripes</name>
    <name type="common">Giant centipede</name>
    <dbReference type="NCBI Taxonomy" id="62613"/>
    <lineage>
        <taxon>Eukaryota</taxon>
        <taxon>Metazoa</taxon>
        <taxon>Ecdysozoa</taxon>
        <taxon>Arthropoda</taxon>
        <taxon>Myriapoda</taxon>
        <taxon>Chilopoda</taxon>
        <taxon>Pleurostigmophora</taxon>
        <taxon>Scolopendromorpha</taxon>
        <taxon>Scolopendridae</taxon>
        <taxon>Ethmostigmus</taxon>
    </lineage>
</organism>
<accession>P0DQF8</accession>
<keyword id="KW-1015">Disulfide bond</keyword>
<keyword id="KW-0964">Secreted</keyword>
<keyword id="KW-0732">Signal</keyword>
<keyword id="KW-0800">Toxin</keyword>
<comment type="subcellular location">
    <subcellularLocation>
        <location evidence="4">Secreted</location>
    </subcellularLocation>
</comment>
<comment type="tissue specificity">
    <text evidence="4">Expressed by the venom gland.</text>
</comment>
<comment type="PTM">
    <text evidence="3">Contains 1 disulfide bond.</text>
</comment>
<comment type="similarity">
    <text evidence="3">Belongs to the scoloptoxin-23 family.</text>
</comment>
<comment type="caution">
    <text evidence="4">All E.rubripes family members described in 'Undeheim et al., 2014' have not been imported into UniProtKB. Please, refer to this paper to access them.</text>
</comment>
<comment type="online information" name="National Center for Biotechnology Information (NCBI)">
    <link uri="https://www.ncbi.nlm.nih.gov/nuccore/GASI01000176"/>
</comment>
<dbReference type="SMR" id="P0DQF8"/>
<dbReference type="GO" id="GO:0005576">
    <property type="term" value="C:extracellular region"/>
    <property type="evidence" value="ECO:0007669"/>
    <property type="project" value="UniProtKB-SubCell"/>
</dbReference>
<dbReference type="GO" id="GO:0090729">
    <property type="term" value="F:toxin activity"/>
    <property type="evidence" value="ECO:0007669"/>
    <property type="project" value="UniProtKB-KW"/>
</dbReference>
<reference key="1">
    <citation type="journal article" date="2014" name="Mol. Biol. Evol.">
        <title>Clawing through evolution: toxin diversification and convergence in the ancient lineage Chilopoda (centipedes).</title>
        <authorList>
            <person name="Undheim E.A."/>
            <person name="Jones A."/>
            <person name="Clauser K.R."/>
            <person name="Holland J.W."/>
            <person name="Pineda S.S."/>
            <person name="King G.F."/>
            <person name="Fry B.G."/>
        </authorList>
    </citation>
    <scope>NUCLEOTIDE SEQUENCE [MRNA]</scope>
    <scope>NOMENCLATURE</scope>
    <source>
        <tissue>Venom gland</tissue>
    </source>
</reference>
<name>TXN2A_ETHRU</name>
<evidence type="ECO:0000255" key="1"/>
<evidence type="ECO:0000303" key="2">
    <source>
    </source>
</evidence>
<evidence type="ECO:0000305" key="3"/>
<evidence type="ECO:0000305" key="4">
    <source>
    </source>
</evidence>